<protein>
    <recommendedName>
        <fullName>Chaperone protein ClpB</fullName>
    </recommendedName>
</protein>
<comment type="function">
    <text evidence="1">Part of a stress-induced multi-chaperone system, it is involved in the recovery of the cell from heat-induced damage, in cooperation with DnaK, DnaJ and GrpE. Acts before DnaK, in the processing of protein aggregates. Protein binding stimulates the ATPase activity; ATP hydrolysis unfolds the denatured protein aggregates, which probably helps expose new hydrophobic binding sites on the surface of ClpB-bound aggregates, contributing to the solubilization and refolding of denatured protein aggregates by DnaK (By similarity).</text>
</comment>
<comment type="subunit">
    <text evidence="1">Homohexamer. The oligomerization is ATP-dependent (By similarity).</text>
</comment>
<comment type="subcellular location">
    <subcellularLocation>
        <location evidence="3">Cytoplasm</location>
    </subcellularLocation>
</comment>
<comment type="domain">
    <text evidence="1">The Clp repeat (R) domain probably functions as a substrate-discriminating domain, recruiting aggregated proteins to the ClpB hexamer and/or stabilizing bound proteins. The NBD2 domain is responsible for oligomerization, whereas the NBD1 domain stabilizes the hexamer probably in an ATP-dependent manner. The movement of the coiled-coil domain is essential for ClpB ability to rescue proteins from an aggregated state, probably by pulling apart large aggregated proteins, which are bound between the coiled-coils motifs of adjacent ClpB subunits in the functional hexamer (By similarity).</text>
</comment>
<comment type="similarity">
    <text evidence="3">Belongs to the ClpA/ClpB family.</text>
</comment>
<accession>Q7A6G6</accession>
<dbReference type="EMBL" id="BA000018">
    <property type="protein sequence ID" value="BAB42075.1"/>
    <property type="molecule type" value="Genomic_DNA"/>
</dbReference>
<dbReference type="PIR" id="H89864">
    <property type="entry name" value="H89864"/>
</dbReference>
<dbReference type="RefSeq" id="WP_000353954.1">
    <property type="nucleotide sequence ID" value="NC_002745.2"/>
</dbReference>
<dbReference type="SMR" id="Q7A6G6"/>
<dbReference type="EnsemblBacteria" id="BAB42075">
    <property type="protein sequence ID" value="BAB42075"/>
    <property type="gene ID" value="BAB42075"/>
</dbReference>
<dbReference type="KEGG" id="sau:SA0835"/>
<dbReference type="HOGENOM" id="CLU_005070_4_0_9"/>
<dbReference type="GO" id="GO:0005737">
    <property type="term" value="C:cytoplasm"/>
    <property type="evidence" value="ECO:0007669"/>
    <property type="project" value="UniProtKB-SubCell"/>
</dbReference>
<dbReference type="GO" id="GO:0005524">
    <property type="term" value="F:ATP binding"/>
    <property type="evidence" value="ECO:0007669"/>
    <property type="project" value="UniProtKB-KW"/>
</dbReference>
<dbReference type="GO" id="GO:0016887">
    <property type="term" value="F:ATP hydrolysis activity"/>
    <property type="evidence" value="ECO:0007669"/>
    <property type="project" value="InterPro"/>
</dbReference>
<dbReference type="GO" id="GO:0034605">
    <property type="term" value="P:cellular response to heat"/>
    <property type="evidence" value="ECO:0007669"/>
    <property type="project" value="TreeGrafter"/>
</dbReference>
<dbReference type="GO" id="GO:0042026">
    <property type="term" value="P:protein refolding"/>
    <property type="evidence" value="ECO:0007669"/>
    <property type="project" value="InterPro"/>
</dbReference>
<dbReference type="CDD" id="cd00009">
    <property type="entry name" value="AAA"/>
    <property type="match status" value="1"/>
</dbReference>
<dbReference type="CDD" id="cd19499">
    <property type="entry name" value="RecA-like_ClpB_Hsp104-like"/>
    <property type="match status" value="1"/>
</dbReference>
<dbReference type="FunFam" id="3.40.50.300:FF:000120">
    <property type="entry name" value="ATP-dependent chaperone ClpB"/>
    <property type="match status" value="1"/>
</dbReference>
<dbReference type="FunFam" id="3.40.50.300:FF:000025">
    <property type="entry name" value="ATP-dependent Clp protease subunit"/>
    <property type="match status" value="1"/>
</dbReference>
<dbReference type="FunFam" id="3.40.50.300:FF:000010">
    <property type="entry name" value="Chaperone clpB 1, putative"/>
    <property type="match status" value="1"/>
</dbReference>
<dbReference type="Gene3D" id="1.10.8.60">
    <property type="match status" value="1"/>
</dbReference>
<dbReference type="Gene3D" id="1.10.1780.10">
    <property type="entry name" value="Clp, N-terminal domain"/>
    <property type="match status" value="1"/>
</dbReference>
<dbReference type="Gene3D" id="3.40.50.300">
    <property type="entry name" value="P-loop containing nucleotide triphosphate hydrolases"/>
    <property type="match status" value="3"/>
</dbReference>
<dbReference type="InterPro" id="IPR003593">
    <property type="entry name" value="AAA+_ATPase"/>
</dbReference>
<dbReference type="InterPro" id="IPR003959">
    <property type="entry name" value="ATPase_AAA_core"/>
</dbReference>
<dbReference type="InterPro" id="IPR017730">
    <property type="entry name" value="Chaperonin_ClpB"/>
</dbReference>
<dbReference type="InterPro" id="IPR019489">
    <property type="entry name" value="Clp_ATPase_C"/>
</dbReference>
<dbReference type="InterPro" id="IPR036628">
    <property type="entry name" value="Clp_N_dom_sf"/>
</dbReference>
<dbReference type="InterPro" id="IPR004176">
    <property type="entry name" value="Clp_R_dom"/>
</dbReference>
<dbReference type="InterPro" id="IPR001270">
    <property type="entry name" value="ClpA/B"/>
</dbReference>
<dbReference type="InterPro" id="IPR018368">
    <property type="entry name" value="ClpA/B_CS1"/>
</dbReference>
<dbReference type="InterPro" id="IPR028299">
    <property type="entry name" value="ClpA/B_CS2"/>
</dbReference>
<dbReference type="InterPro" id="IPR041546">
    <property type="entry name" value="ClpA/ClpB_AAA_lid"/>
</dbReference>
<dbReference type="InterPro" id="IPR050130">
    <property type="entry name" value="ClpA_ClpB"/>
</dbReference>
<dbReference type="InterPro" id="IPR027417">
    <property type="entry name" value="P-loop_NTPase"/>
</dbReference>
<dbReference type="NCBIfam" id="TIGR03346">
    <property type="entry name" value="chaperone_ClpB"/>
    <property type="match status" value="1"/>
</dbReference>
<dbReference type="PANTHER" id="PTHR11638">
    <property type="entry name" value="ATP-DEPENDENT CLP PROTEASE"/>
    <property type="match status" value="1"/>
</dbReference>
<dbReference type="PANTHER" id="PTHR11638:SF18">
    <property type="entry name" value="HEAT SHOCK PROTEIN 104"/>
    <property type="match status" value="1"/>
</dbReference>
<dbReference type="Pfam" id="PF00004">
    <property type="entry name" value="AAA"/>
    <property type="match status" value="1"/>
</dbReference>
<dbReference type="Pfam" id="PF07724">
    <property type="entry name" value="AAA_2"/>
    <property type="match status" value="1"/>
</dbReference>
<dbReference type="Pfam" id="PF17871">
    <property type="entry name" value="AAA_lid_9"/>
    <property type="match status" value="1"/>
</dbReference>
<dbReference type="Pfam" id="PF02861">
    <property type="entry name" value="Clp_N"/>
    <property type="match status" value="2"/>
</dbReference>
<dbReference type="Pfam" id="PF10431">
    <property type="entry name" value="ClpB_D2-small"/>
    <property type="match status" value="1"/>
</dbReference>
<dbReference type="PRINTS" id="PR00300">
    <property type="entry name" value="CLPPROTEASEA"/>
</dbReference>
<dbReference type="SMART" id="SM00382">
    <property type="entry name" value="AAA"/>
    <property type="match status" value="2"/>
</dbReference>
<dbReference type="SMART" id="SM01086">
    <property type="entry name" value="ClpB_D2-small"/>
    <property type="match status" value="1"/>
</dbReference>
<dbReference type="SUPFAM" id="SSF81923">
    <property type="entry name" value="Double Clp-N motif"/>
    <property type="match status" value="1"/>
</dbReference>
<dbReference type="SUPFAM" id="SSF52540">
    <property type="entry name" value="P-loop containing nucleoside triphosphate hydrolases"/>
    <property type="match status" value="2"/>
</dbReference>
<dbReference type="PROSITE" id="PS51903">
    <property type="entry name" value="CLP_R"/>
    <property type="match status" value="1"/>
</dbReference>
<dbReference type="PROSITE" id="PS00870">
    <property type="entry name" value="CLPAB_1"/>
    <property type="match status" value="1"/>
</dbReference>
<dbReference type="PROSITE" id="PS00871">
    <property type="entry name" value="CLPAB_2"/>
    <property type="match status" value="1"/>
</dbReference>
<proteinExistence type="evidence at protein level"/>
<evidence type="ECO:0000250" key="1"/>
<evidence type="ECO:0000255" key="2">
    <source>
        <dbReference type="PROSITE-ProRule" id="PRU01251"/>
    </source>
</evidence>
<evidence type="ECO:0000305" key="3"/>
<organism>
    <name type="scientific">Staphylococcus aureus (strain N315)</name>
    <dbReference type="NCBI Taxonomy" id="158879"/>
    <lineage>
        <taxon>Bacteria</taxon>
        <taxon>Bacillati</taxon>
        <taxon>Bacillota</taxon>
        <taxon>Bacilli</taxon>
        <taxon>Bacillales</taxon>
        <taxon>Staphylococcaceae</taxon>
        <taxon>Staphylococcus</taxon>
    </lineage>
</organism>
<name>CLPB_STAAN</name>
<reference key="1">
    <citation type="journal article" date="2001" name="Lancet">
        <title>Whole genome sequencing of meticillin-resistant Staphylococcus aureus.</title>
        <authorList>
            <person name="Kuroda M."/>
            <person name="Ohta T."/>
            <person name="Uchiyama I."/>
            <person name="Baba T."/>
            <person name="Yuzawa H."/>
            <person name="Kobayashi I."/>
            <person name="Cui L."/>
            <person name="Oguchi A."/>
            <person name="Aoki K."/>
            <person name="Nagai Y."/>
            <person name="Lian J.-Q."/>
            <person name="Ito T."/>
            <person name="Kanamori M."/>
            <person name="Matsumaru H."/>
            <person name="Maruyama A."/>
            <person name="Murakami H."/>
            <person name="Hosoyama A."/>
            <person name="Mizutani-Ui Y."/>
            <person name="Takahashi N.K."/>
            <person name="Sawano T."/>
            <person name="Inoue R."/>
            <person name="Kaito C."/>
            <person name="Sekimizu K."/>
            <person name="Hirakawa H."/>
            <person name="Kuhara S."/>
            <person name="Goto S."/>
            <person name="Yabuzaki J."/>
            <person name="Kanehisa M."/>
            <person name="Yamashita A."/>
            <person name="Oshima K."/>
            <person name="Furuya K."/>
            <person name="Yoshino C."/>
            <person name="Shiba T."/>
            <person name="Hattori M."/>
            <person name="Ogasawara N."/>
            <person name="Hayashi H."/>
            <person name="Hiramatsu K."/>
        </authorList>
    </citation>
    <scope>NUCLEOTIDE SEQUENCE [LARGE SCALE GENOMIC DNA]</scope>
    <source>
        <strain>N315</strain>
    </source>
</reference>
<reference key="2">
    <citation type="submission" date="2007-10" db="UniProtKB">
        <title>Shotgun proteomic analysis of total and membrane protein extracts of S. aureus strain N315.</title>
        <authorList>
            <person name="Vaezzadeh A.R."/>
            <person name="Deshusses J."/>
            <person name="Lescuyer P."/>
            <person name="Hochstrasser D.F."/>
        </authorList>
    </citation>
    <scope>IDENTIFICATION BY MASS SPECTROMETRY [LARGE SCALE ANALYSIS]</scope>
    <source>
        <strain>N315</strain>
    </source>
</reference>
<gene>
    <name type="primary">clpB</name>
    <name type="ordered locus">SA0835</name>
</gene>
<feature type="chain" id="PRO_0000191177" description="Chaperone protein ClpB">
    <location>
        <begin position="1"/>
        <end position="869"/>
    </location>
</feature>
<feature type="domain" description="Clp R" evidence="2">
    <location>
        <begin position="3"/>
        <end position="145"/>
    </location>
</feature>
<feature type="region of interest" description="Repeat 1" evidence="2">
    <location>
        <begin position="6"/>
        <end position="71"/>
    </location>
</feature>
<feature type="region of interest" description="Repeat 2" evidence="2">
    <location>
        <begin position="85"/>
        <end position="145"/>
    </location>
</feature>
<feature type="region of interest" description="NBD1" evidence="1">
    <location>
        <begin position="158"/>
        <end position="339"/>
    </location>
</feature>
<feature type="region of interest" description="Linker" evidence="1">
    <location>
        <begin position="340"/>
        <end position="549"/>
    </location>
</feature>
<feature type="region of interest" description="NBD2" evidence="1">
    <location>
        <begin position="559"/>
        <end position="771"/>
    </location>
</feature>
<feature type="region of interest" description="C-terminal" evidence="1">
    <location>
        <begin position="772"/>
        <end position="869"/>
    </location>
</feature>
<feature type="coiled-coil region" evidence="1">
    <location>
        <begin position="390"/>
        <end position="524"/>
    </location>
</feature>
<feature type="binding site" evidence="1">
    <location>
        <begin position="205"/>
        <end position="212"/>
    </location>
    <ligand>
        <name>ATP</name>
        <dbReference type="ChEBI" id="CHEBI:30616"/>
        <label>1</label>
    </ligand>
</feature>
<feature type="binding site" evidence="1">
    <location>
        <begin position="609"/>
        <end position="616"/>
    </location>
    <ligand>
        <name>ATP</name>
        <dbReference type="ChEBI" id="CHEBI:30616"/>
        <label>2</label>
    </ligand>
</feature>
<sequence length="869" mass="98330">MDINKMTYAVQSALQQAVELSQQHKLQNIEIEAILSAALNESESLYKSILERANIEVDQLNKAYEDKLNTYASVEGDNIQYGQYISQQANQLITKAESYMKEYEDEYISMEHILRSAMDIDQTTKHYINNKVEVIKEIIKKVRGGNHVTSQNPEVNYEALAKYGRDLVEEVRQGKMDPVIGRDEEIRNTIRILSRKTKNNPVLIGEPGVGKTAIVEGLAQRIVKKDVPESLLDKTVFELDLSALVAGAKYRGEFEERLKAVLKEVKESDGRIILFIDEIHMLVGAGKTDGAMDAGNMLKPMLARGELHCIGATTLNEYREYIEKDSALERRFQKVAVSEPDVEDTISILRGLKERYEVYHGVRIQDRALVAAAELSDRYITDRFLPDKAIDLVDQACATIRTEMGSNPTELDQVNRRVMQLEIEESALKNESDNASKQRLQELQEELANEKEKQAALQSRVESEKEKIANLQEKRAQLDESRQALEDAQTNNNLEKAAELQYGTIPQLEKELRELEDNFQDEQGEDTDRMIREVVTDEEIGDIVSQWTGIPVSKLVETEREKLLHLSDILHKRVVGQDKAVDLVSDAVVRARAGIKDPNRPIGSFLFLGPTGVGKTELAKSLAASLFDSEKHMIRIDMSEYMEKHAVSRLIGAPPGYIGHDEGGQLTEAVRRNPYSVILLDEVEKAHTDVFNVLLQILDEGRLTDSKGRSVDFKNTIIIMTSNIGSQVLLENVKETGEITESTEKAVMTNLNAYFKPEILNRMDDIVLFKPLSIDDMSMIVDKILTQLNIRLLEQRISIEVSDDAKAWLGQEAYEPQYGARPLKRFVQRQIETPLARMMIKEGFPEGTTIKVNLNSDNNLTFNVEKIHE</sequence>
<keyword id="KW-0067">ATP-binding</keyword>
<keyword id="KW-0143">Chaperone</keyword>
<keyword id="KW-0175">Coiled coil</keyword>
<keyword id="KW-0963">Cytoplasm</keyword>
<keyword id="KW-0547">Nucleotide-binding</keyword>
<keyword id="KW-0677">Repeat</keyword>
<keyword id="KW-0346">Stress response</keyword>